<feature type="chain" id="PRO_0000119969" description="Mitochondrial distribution and morphology protein 30">
    <location>
        <begin position="1"/>
        <end position="598"/>
    </location>
</feature>
<feature type="domain" description="F-box" evidence="2">
    <location>
        <begin position="13"/>
        <end position="59"/>
    </location>
</feature>
<gene>
    <name type="primary">MDM30</name>
    <name type="ordered locus">YLR368W</name>
</gene>
<accession>Q05930</accession>
<accession>D6VZ05</accession>
<evidence type="ECO:0000250" key="1"/>
<evidence type="ECO:0000255" key="2">
    <source>
        <dbReference type="PROSITE-ProRule" id="PRU00080"/>
    </source>
</evidence>
<evidence type="ECO:0000269" key="3">
    <source>
    </source>
</evidence>
<evidence type="ECO:0000269" key="4">
    <source>
    </source>
</evidence>
<evidence type="ECO:0000269" key="5">
    <source>
    </source>
</evidence>
<evidence type="ECO:0000269" key="6">
    <source>
    </source>
</evidence>
<evidence type="ECO:0000269" key="7">
    <source>
    </source>
</evidence>
<evidence type="ECO:0000269" key="8">
    <source>
    </source>
</evidence>
<evidence type="ECO:0000269" key="9">
    <source>
    </source>
</evidence>
<name>MDM30_YEAST</name>
<sequence>MTKRRNLFMVGSSFTIDHLPPEIWLCISKLVGTSDLHNLCLINRRLYLTITSDEIWKRRCYDRWINRESLDILTGNDYDSIPVSQWYSYYLRRAKWENKIFCLLWGLTEETNPQHFREKYLHILQFRHYKLATFLHRIIKQGYIPDKRPLDLITYANYLLKNVRHKYVFPLFYPTNAAELKNLNNMASRDAEMIYLRLSAIDTSFDDLLDAREFILNGICSDLLQKYKKIEEFLKLRPVTRVSKLISISTDYLDCFTQPHDSVGQTNDRATGRELHREDFMLLRVYSREGRGYKTIILAIIQAITKRYNVDSYLARDHLVVSEPDFPDGRAFVTVNEDFQPYIFDKEDLLSVWSNNFHNAENFESTVLPALLEPISIQHLLTEFFRELLRCKPRPFEGYPNRAHGLRDMFPYGKVEVPRDVTMYFAFIYDLFDGMFESGMTSLRGQMLRDLLNYVNANNFGDLNIIIGQNALKEPNDCWSNKRDYVLLDDNNKIGYFYTDIETEDTLCALNQYEVDGKVFITTIDILGDIRVRLAEGLTPFQGDNDKLWESFSSVVPRTDWGLFFKGYDKERRRMQLNPYIEEKLSNLANDEQPLHNL</sequence>
<keyword id="KW-0963">Cytoplasm</keyword>
<keyword id="KW-0496">Mitochondrion</keyword>
<keyword id="KW-1185">Reference proteome</keyword>
<keyword id="KW-0833">Ubl conjugation pathway</keyword>
<protein>
    <recommendedName>
        <fullName>Mitochondrial distribution and morphology protein 30</fullName>
    </recommendedName>
</protein>
<reference key="1">
    <citation type="journal article" date="1997" name="Nature">
        <title>The nucleotide sequence of Saccharomyces cerevisiae chromosome XII.</title>
        <authorList>
            <person name="Johnston M."/>
            <person name="Hillier L.W."/>
            <person name="Riles L."/>
            <person name="Albermann K."/>
            <person name="Andre B."/>
            <person name="Ansorge W."/>
            <person name="Benes V."/>
            <person name="Brueckner M."/>
            <person name="Delius H."/>
            <person name="Dubois E."/>
            <person name="Duesterhoeft A."/>
            <person name="Entian K.-D."/>
            <person name="Floeth M."/>
            <person name="Goffeau A."/>
            <person name="Hebling U."/>
            <person name="Heumann K."/>
            <person name="Heuss-Neitzel D."/>
            <person name="Hilbert H."/>
            <person name="Hilger F."/>
            <person name="Kleine K."/>
            <person name="Koetter P."/>
            <person name="Louis E.J."/>
            <person name="Messenguy F."/>
            <person name="Mewes H.-W."/>
            <person name="Miosga T."/>
            <person name="Moestl D."/>
            <person name="Mueller-Auer S."/>
            <person name="Nentwich U."/>
            <person name="Obermaier B."/>
            <person name="Piravandi E."/>
            <person name="Pohl T.M."/>
            <person name="Portetelle D."/>
            <person name="Purnelle B."/>
            <person name="Rechmann S."/>
            <person name="Rieger M."/>
            <person name="Rinke M."/>
            <person name="Rose M."/>
            <person name="Scharfe M."/>
            <person name="Scherens B."/>
            <person name="Scholler P."/>
            <person name="Schwager C."/>
            <person name="Schwarz S."/>
            <person name="Underwood A.P."/>
            <person name="Urrestarazu L.A."/>
            <person name="Vandenbol M."/>
            <person name="Verhasselt P."/>
            <person name="Vierendeels F."/>
            <person name="Voet M."/>
            <person name="Volckaert G."/>
            <person name="Voss H."/>
            <person name="Wambutt R."/>
            <person name="Wedler E."/>
            <person name="Wedler H."/>
            <person name="Zimmermann F.K."/>
            <person name="Zollner A."/>
            <person name="Hani J."/>
            <person name="Hoheisel J.D."/>
        </authorList>
    </citation>
    <scope>NUCLEOTIDE SEQUENCE [LARGE SCALE GENOMIC DNA]</scope>
    <source>
        <strain>ATCC 204508 / S288c</strain>
    </source>
</reference>
<reference key="2">
    <citation type="journal article" date="2014" name="G3 (Bethesda)">
        <title>The reference genome sequence of Saccharomyces cerevisiae: Then and now.</title>
        <authorList>
            <person name="Engel S.R."/>
            <person name="Dietrich F.S."/>
            <person name="Fisk D.G."/>
            <person name="Binkley G."/>
            <person name="Balakrishnan R."/>
            <person name="Costanzo M.C."/>
            <person name="Dwight S.S."/>
            <person name="Hitz B.C."/>
            <person name="Karra K."/>
            <person name="Nash R.S."/>
            <person name="Weng S."/>
            <person name="Wong E.D."/>
            <person name="Lloyd P."/>
            <person name="Skrzypek M.S."/>
            <person name="Miyasato S.R."/>
            <person name="Simison M."/>
            <person name="Cherry J.M."/>
        </authorList>
    </citation>
    <scope>GENOME REANNOTATION</scope>
    <source>
        <strain>ATCC 204508 / S288c</strain>
    </source>
</reference>
<reference key="3">
    <citation type="journal article" date="2002" name="Mol. Biol. Cell">
        <title>Genetic basis of mitochondrial function and morphology in Saccharomyces cerevisiae.</title>
        <authorList>
            <person name="Dimmer K.S."/>
            <person name="Fritz S."/>
            <person name="Fuchs F."/>
            <person name="Messerschmitt M."/>
            <person name="Weinbach N."/>
            <person name="Neupert W."/>
            <person name="Westermann B."/>
        </authorList>
    </citation>
    <scope>FUNCTION</scope>
</reference>
<reference key="4">
    <citation type="journal article" date="2003" name="Mol. Biol. Cell">
        <title>Mdm30 is an F-box protein required for maintenance of fusion-competent mitochondria in yeast.</title>
        <authorList>
            <person name="Fritz S."/>
            <person name="Weinbach N."/>
            <person name="Westermann B."/>
        </authorList>
    </citation>
    <scope>FUNCTION</scope>
    <scope>SUBCELLULAR LOCATION</scope>
</reference>
<reference key="5">
    <citation type="journal article" date="2003" name="Proc. Natl. Acad. Sci. U.S.A.">
        <title>The proteome of Saccharomyces cerevisiae mitochondria.</title>
        <authorList>
            <person name="Sickmann A."/>
            <person name="Reinders J."/>
            <person name="Wagner Y."/>
            <person name="Joppich C."/>
            <person name="Zahedi R.P."/>
            <person name="Meyer H.E."/>
            <person name="Schoenfisch B."/>
            <person name="Perschil I."/>
            <person name="Chacinska A."/>
            <person name="Guiard B."/>
            <person name="Rehling P."/>
            <person name="Pfanner N."/>
            <person name="Meisinger C."/>
        </authorList>
    </citation>
    <scope>SUBCELLULAR LOCATION [LARGE SCALE ANALYSIS]</scope>
    <source>
        <strain>ATCC 76625 / YPH499</strain>
    </source>
</reference>
<reference key="6">
    <citation type="journal article" date="2004" name="Proteins">
        <title>Functional interaction of 13 yeast SCF complexes with a set of yeast E2 enzymes in vitro.</title>
        <authorList>
            <person name="Kus B.M."/>
            <person name="Caldon C.E."/>
            <person name="Andorn-Broza R."/>
            <person name="Edwards A.M."/>
        </authorList>
    </citation>
    <scope>INTERACTION WITH SKP1</scope>
    <scope>RECONSTITUTION OF THE SCF(MDM30) COMPLEX</scope>
</reference>
<reference key="7">
    <citation type="journal article" date="2006" name="J. Cell Biol.">
        <title>Regulation of mitochondrial fusion by the F-box protein Mdm30 involves proteasome-independent turnover of Fzo1.</title>
        <authorList>
            <person name="Escobar-Henriques M."/>
            <person name="Westermann B."/>
            <person name="Langer T."/>
        </authorList>
    </citation>
    <scope>FUNCTION</scope>
    <scope>INTERACTION WITH FZO1</scope>
</reference>
<reference key="8">
    <citation type="journal article" date="2008" name="Mol. Biol. Cell">
        <title>Ubiquitin-proteasome-dependent degradation of a mitofusin, a critical regulator of mitochondrial fusion.</title>
        <authorList>
            <person name="Cohen M.M."/>
            <person name="Leboucher G.P."/>
            <person name="Livnat-Levanon N."/>
            <person name="Glickman M.H."/>
            <person name="Weissman A.M."/>
        </authorList>
    </citation>
    <scope>FUNCTION</scope>
</reference>
<reference key="9">
    <citation type="journal article" date="2011" name="J. Cell Sci.">
        <title>Ugo1 and Mdm30 act sequentially during Fzo1-mediated mitochondrial outer membrane fusion.</title>
        <authorList>
            <person name="Anton F."/>
            <person name="Fres J.M."/>
            <person name="Schauss A."/>
            <person name="Pinson B."/>
            <person name="Praefcke G.J."/>
            <person name="Langer T."/>
            <person name="Escobar-Henriques M."/>
        </authorList>
    </citation>
    <scope>FUNCTION</scope>
    <scope>INTERACTION WITH FZO1</scope>
</reference>
<reference key="10">
    <citation type="journal article" date="2011" name="J. Cell Sci.">
        <title>Sequential requirements for the GTPase domain of the mitofusin Fzo1 and the ubiquitin ligase SCFMdm30 in mitochondrial outer membrane fusion.</title>
        <authorList>
            <person name="Cohen M.M."/>
            <person name="Amiott E.A."/>
            <person name="Day A.R."/>
            <person name="Leboucher G.P."/>
            <person name="Pryce E.N."/>
            <person name="Glickman M.H."/>
            <person name="McCaffery J.M."/>
            <person name="Shaw J.M."/>
            <person name="Weissman A.M."/>
        </authorList>
    </citation>
    <scope>FUNCTION</scope>
    <scope>INTERACTION WITH FZO1</scope>
</reference>
<dbReference type="EMBL" id="U19103">
    <property type="protein sequence ID" value="AAB67566.1"/>
    <property type="molecule type" value="Genomic_DNA"/>
</dbReference>
<dbReference type="EMBL" id="BK006945">
    <property type="protein sequence ID" value="DAA09671.1"/>
    <property type="molecule type" value="Genomic_DNA"/>
</dbReference>
<dbReference type="PIR" id="S51386">
    <property type="entry name" value="S51386"/>
</dbReference>
<dbReference type="RefSeq" id="NP_013472.3">
    <property type="nucleotide sequence ID" value="NM_001182257.3"/>
</dbReference>
<dbReference type="BioGRID" id="31628">
    <property type="interactions" value="97"/>
</dbReference>
<dbReference type="ComplexPortal" id="CPX-3242">
    <property type="entry name" value="SCF-Mdm30 ubiquitin ligase complex"/>
</dbReference>
<dbReference type="DIP" id="DIP-1239N"/>
<dbReference type="FunCoup" id="Q05930">
    <property type="interactions" value="106"/>
</dbReference>
<dbReference type="IntAct" id="Q05930">
    <property type="interactions" value="13"/>
</dbReference>
<dbReference type="MINT" id="Q05930"/>
<dbReference type="STRING" id="4932.YLR368W"/>
<dbReference type="PaxDb" id="4932-YLR368W"/>
<dbReference type="PeptideAtlas" id="Q05930"/>
<dbReference type="EnsemblFungi" id="YLR368W_mRNA">
    <property type="protein sequence ID" value="YLR368W"/>
    <property type="gene ID" value="YLR368W"/>
</dbReference>
<dbReference type="GeneID" id="851083"/>
<dbReference type="KEGG" id="sce:YLR368W"/>
<dbReference type="AGR" id="SGD:S000004360"/>
<dbReference type="SGD" id="S000004360">
    <property type="gene designation" value="MDM30"/>
</dbReference>
<dbReference type="VEuPathDB" id="FungiDB:YLR368W"/>
<dbReference type="eggNOG" id="ENOG502QU21">
    <property type="taxonomic scope" value="Eukaryota"/>
</dbReference>
<dbReference type="HOGENOM" id="CLU_477498_0_0_1"/>
<dbReference type="InParanoid" id="Q05930"/>
<dbReference type="OMA" id="CHLEDIM"/>
<dbReference type="OrthoDB" id="550575at2759"/>
<dbReference type="BioCyc" id="YEAST:G3O-32437-MONOMER"/>
<dbReference type="UniPathway" id="UPA00143"/>
<dbReference type="BioGRID-ORCS" id="851083">
    <property type="hits" value="0 hits in 10 CRISPR screens"/>
</dbReference>
<dbReference type="PRO" id="PR:Q05930"/>
<dbReference type="Proteomes" id="UP000002311">
    <property type="component" value="Chromosome XII"/>
</dbReference>
<dbReference type="RNAct" id="Q05930">
    <property type="molecule type" value="protein"/>
</dbReference>
<dbReference type="GO" id="GO:0005739">
    <property type="term" value="C:mitochondrion"/>
    <property type="evidence" value="ECO:0007005"/>
    <property type="project" value="SGD"/>
</dbReference>
<dbReference type="GO" id="GO:0005634">
    <property type="term" value="C:nucleus"/>
    <property type="evidence" value="ECO:0007005"/>
    <property type="project" value="SGD"/>
</dbReference>
<dbReference type="GO" id="GO:0019005">
    <property type="term" value="C:SCF ubiquitin ligase complex"/>
    <property type="evidence" value="ECO:0000314"/>
    <property type="project" value="SGD"/>
</dbReference>
<dbReference type="GO" id="GO:0008053">
    <property type="term" value="P:mitochondrial fusion"/>
    <property type="evidence" value="ECO:0000315"/>
    <property type="project" value="SGD"/>
</dbReference>
<dbReference type="GO" id="GO:0007005">
    <property type="term" value="P:mitochondrion organization"/>
    <property type="evidence" value="ECO:0000315"/>
    <property type="project" value="SGD"/>
</dbReference>
<dbReference type="GO" id="GO:0016567">
    <property type="term" value="P:protein ubiquitination"/>
    <property type="evidence" value="ECO:0007669"/>
    <property type="project" value="UniProtKB-UniPathway"/>
</dbReference>
<dbReference type="GO" id="GO:0051603">
    <property type="term" value="P:proteolysis involved in protein catabolic process"/>
    <property type="evidence" value="ECO:0000314"/>
    <property type="project" value="SGD"/>
</dbReference>
<dbReference type="GO" id="GO:0010793">
    <property type="term" value="P:regulation of mRNA export from nucleus"/>
    <property type="evidence" value="ECO:0000315"/>
    <property type="project" value="SGD"/>
</dbReference>
<dbReference type="GO" id="GO:0031146">
    <property type="term" value="P:SCF-dependent proteasomal ubiquitin-dependent protein catabolic process"/>
    <property type="evidence" value="ECO:0000315"/>
    <property type="project" value="SGD"/>
</dbReference>
<dbReference type="GO" id="GO:0006511">
    <property type="term" value="P:ubiquitin-dependent protein catabolic process"/>
    <property type="evidence" value="ECO:0000314"/>
    <property type="project" value="ComplexPortal"/>
</dbReference>
<dbReference type="CDD" id="cd22143">
    <property type="entry name" value="F-box_ScMDM30-like"/>
    <property type="match status" value="1"/>
</dbReference>
<dbReference type="Gene3D" id="1.20.1280.50">
    <property type="match status" value="1"/>
</dbReference>
<dbReference type="InterPro" id="IPR036047">
    <property type="entry name" value="F-box-like_dom_sf"/>
</dbReference>
<dbReference type="InterPro" id="IPR001810">
    <property type="entry name" value="F-box_dom"/>
</dbReference>
<dbReference type="Pfam" id="PF12937">
    <property type="entry name" value="F-box-like"/>
    <property type="match status" value="1"/>
</dbReference>
<dbReference type="SMART" id="SM00256">
    <property type="entry name" value="FBOX"/>
    <property type="match status" value="1"/>
</dbReference>
<dbReference type="SUPFAM" id="SSF81383">
    <property type="entry name" value="F-box domain"/>
    <property type="match status" value="1"/>
</dbReference>
<dbReference type="PROSITE" id="PS50181">
    <property type="entry name" value="FBOX"/>
    <property type="match status" value="1"/>
</dbReference>
<proteinExistence type="evidence at protein level"/>
<comment type="function">
    <text evidence="1 3 4 6 7 8 9">Substrate recognition component of a SCF (SKP1-CUL1-F-box protein) E3 ubiquitin-protein ligase complex which mediates the ubiquitination and subsequent proteasomal degradation of target proteins. Probably recognizes and binds to phosphorylated target proteins (By similarity). Recognizes FZO1 and regulates the amount of FZO1. Regulatory factor for the mitochondrial fusion machinery. Required for mitochondrial DNA maintenance.</text>
</comment>
<comment type="pathway">
    <text>Protein modification; protein ubiquitination.</text>
</comment>
<comment type="subunit">
    <text evidence="5 6 8 9">Interacts with SKP1. Component of the probable SCF(MDM30) complex containing CDC53, SKP1, RBX1 and MDM30. Interacts with SKP1 and FZO1.</text>
</comment>
<comment type="interaction">
    <interactant intactId="EBI-31799">
        <id>Q05930</id>
    </interactant>
    <interactant intactId="EBI-9231">
        <id>P46972</id>
        <label>IMP2</label>
    </interactant>
    <organismsDiffer>false</organismsDiffer>
    <experiments>2</experiments>
</comment>
<comment type="interaction">
    <interactant intactId="EBI-31799">
        <id>Q05930</id>
    </interactant>
    <interactant intactId="EBI-4090">
        <id>P52286</id>
        <label>SKP1</label>
    </interactant>
    <organismsDiffer>false</organismsDiffer>
    <experiments>5</experiments>
</comment>
<comment type="subcellular location">
    <subcellularLocation>
        <location>Cytoplasm</location>
    </subcellularLocation>
    <subcellularLocation>
        <location>Mitochondrion</location>
    </subcellularLocation>
</comment>
<organism>
    <name type="scientific">Saccharomyces cerevisiae (strain ATCC 204508 / S288c)</name>
    <name type="common">Baker's yeast</name>
    <dbReference type="NCBI Taxonomy" id="559292"/>
    <lineage>
        <taxon>Eukaryota</taxon>
        <taxon>Fungi</taxon>
        <taxon>Dikarya</taxon>
        <taxon>Ascomycota</taxon>
        <taxon>Saccharomycotina</taxon>
        <taxon>Saccharomycetes</taxon>
        <taxon>Saccharomycetales</taxon>
        <taxon>Saccharomycetaceae</taxon>
        <taxon>Saccharomyces</taxon>
    </lineage>
</organism>